<proteinExistence type="inferred from homology"/>
<sequence length="280" mass="31519">MKYIGAHVSASGGVENAVLRAVEIGANAFALFTKNQRQWKALALKADTIEKFKRFCKAHQFSPEHILPHDSYLINLGNPEAENLAKSREAFIDEMERANQLGLKLLNFHPSAHLNKISESECLARIAESINIAVDKVPNVIAVIENTAGQGSNLGYRFEHLAEIIDQVEDKNRVGVCLDTCHLFSAGYDISSLESCEQTFSEFERTVGFQYLRGMHLNGSKTPLGSRVDRHHTLREGTIGTDFCKFIMQDDRFDNIPLILETIQPEIWTEEIKFLRTLAK</sequence>
<reference key="1">
    <citation type="journal article" date="2008" name="J. Bacteriol.">
        <title>The complete genome sequence of Actinobacillus pleuropneumoniae L20 (serotype 5b).</title>
        <authorList>
            <person name="Foote S.J."/>
            <person name="Bosse J.T."/>
            <person name="Bouevitch A.B."/>
            <person name="Langford P.R."/>
            <person name="Young N.M."/>
            <person name="Nash J.H.E."/>
        </authorList>
    </citation>
    <scope>NUCLEOTIDE SEQUENCE [LARGE SCALE GENOMIC DNA]</scope>
    <source>
        <strain>L20</strain>
    </source>
</reference>
<evidence type="ECO:0000255" key="1">
    <source>
        <dbReference type="HAMAP-Rule" id="MF_00152"/>
    </source>
</evidence>
<gene>
    <name evidence="1" type="primary">nfo</name>
    <name type="ordered locus">APL_0358</name>
</gene>
<feature type="chain" id="PRO_1000011284" description="Probable endonuclease 4">
    <location>
        <begin position="1"/>
        <end position="280"/>
    </location>
</feature>
<feature type="binding site" evidence="1">
    <location>
        <position position="69"/>
    </location>
    <ligand>
        <name>Zn(2+)</name>
        <dbReference type="ChEBI" id="CHEBI:29105"/>
        <label>1</label>
    </ligand>
</feature>
<feature type="binding site" evidence="1">
    <location>
        <position position="109"/>
    </location>
    <ligand>
        <name>Zn(2+)</name>
        <dbReference type="ChEBI" id="CHEBI:29105"/>
        <label>1</label>
    </ligand>
</feature>
<feature type="binding site" evidence="1">
    <location>
        <position position="145"/>
    </location>
    <ligand>
        <name>Zn(2+)</name>
        <dbReference type="ChEBI" id="CHEBI:29105"/>
        <label>1</label>
    </ligand>
</feature>
<feature type="binding site" evidence="1">
    <location>
        <position position="145"/>
    </location>
    <ligand>
        <name>Zn(2+)</name>
        <dbReference type="ChEBI" id="CHEBI:29105"/>
        <label>2</label>
    </ligand>
</feature>
<feature type="binding site" evidence="1">
    <location>
        <position position="179"/>
    </location>
    <ligand>
        <name>Zn(2+)</name>
        <dbReference type="ChEBI" id="CHEBI:29105"/>
        <label>2</label>
    </ligand>
</feature>
<feature type="binding site" evidence="1">
    <location>
        <position position="182"/>
    </location>
    <ligand>
        <name>Zn(2+)</name>
        <dbReference type="ChEBI" id="CHEBI:29105"/>
        <label>3</label>
    </ligand>
</feature>
<feature type="binding site" evidence="1">
    <location>
        <position position="216"/>
    </location>
    <ligand>
        <name>Zn(2+)</name>
        <dbReference type="ChEBI" id="CHEBI:29105"/>
        <label>2</label>
    </ligand>
</feature>
<feature type="binding site" evidence="1">
    <location>
        <position position="229"/>
    </location>
    <ligand>
        <name>Zn(2+)</name>
        <dbReference type="ChEBI" id="CHEBI:29105"/>
        <label>3</label>
    </ligand>
</feature>
<feature type="binding site" evidence="1">
    <location>
        <position position="231"/>
    </location>
    <ligand>
        <name>Zn(2+)</name>
        <dbReference type="ChEBI" id="CHEBI:29105"/>
        <label>3</label>
    </ligand>
</feature>
<feature type="binding site" evidence="1">
    <location>
        <position position="261"/>
    </location>
    <ligand>
        <name>Zn(2+)</name>
        <dbReference type="ChEBI" id="CHEBI:29105"/>
        <label>2</label>
    </ligand>
</feature>
<protein>
    <recommendedName>
        <fullName evidence="1">Probable endonuclease 4</fullName>
        <ecNumber evidence="1">3.1.21.2</ecNumber>
    </recommendedName>
    <alternativeName>
        <fullName evidence="1">Endodeoxyribonuclease IV</fullName>
    </alternativeName>
    <alternativeName>
        <fullName evidence="1">Endonuclease IV</fullName>
    </alternativeName>
</protein>
<organism>
    <name type="scientific">Actinobacillus pleuropneumoniae serotype 5b (strain L20)</name>
    <dbReference type="NCBI Taxonomy" id="416269"/>
    <lineage>
        <taxon>Bacteria</taxon>
        <taxon>Pseudomonadati</taxon>
        <taxon>Pseudomonadota</taxon>
        <taxon>Gammaproteobacteria</taxon>
        <taxon>Pasteurellales</taxon>
        <taxon>Pasteurellaceae</taxon>
        <taxon>Actinobacillus</taxon>
    </lineage>
</organism>
<name>END4_ACTP2</name>
<dbReference type="EC" id="3.1.21.2" evidence="1"/>
<dbReference type="EMBL" id="CP000569">
    <property type="protein sequence ID" value="ABN73462.1"/>
    <property type="molecule type" value="Genomic_DNA"/>
</dbReference>
<dbReference type="RefSeq" id="WP_009875574.1">
    <property type="nucleotide sequence ID" value="NC_009053.1"/>
</dbReference>
<dbReference type="SMR" id="A3MZ76"/>
<dbReference type="STRING" id="416269.APL_0358"/>
<dbReference type="EnsemblBacteria" id="ABN73462">
    <property type="protein sequence ID" value="ABN73462"/>
    <property type="gene ID" value="APL_0358"/>
</dbReference>
<dbReference type="KEGG" id="apl:APL_0358"/>
<dbReference type="PATRIC" id="fig|416269.6.peg.368"/>
<dbReference type="eggNOG" id="COG0648">
    <property type="taxonomic scope" value="Bacteria"/>
</dbReference>
<dbReference type="HOGENOM" id="CLU_025885_0_4_6"/>
<dbReference type="Proteomes" id="UP000001432">
    <property type="component" value="Chromosome"/>
</dbReference>
<dbReference type="GO" id="GO:0008833">
    <property type="term" value="F:deoxyribonuclease IV (phage-T4-induced) activity"/>
    <property type="evidence" value="ECO:0007669"/>
    <property type="project" value="UniProtKB-UniRule"/>
</dbReference>
<dbReference type="GO" id="GO:0003677">
    <property type="term" value="F:DNA binding"/>
    <property type="evidence" value="ECO:0007669"/>
    <property type="project" value="InterPro"/>
</dbReference>
<dbReference type="GO" id="GO:0003906">
    <property type="term" value="F:DNA-(apurinic or apyrimidinic site) endonuclease activity"/>
    <property type="evidence" value="ECO:0007669"/>
    <property type="project" value="TreeGrafter"/>
</dbReference>
<dbReference type="GO" id="GO:0008081">
    <property type="term" value="F:phosphoric diester hydrolase activity"/>
    <property type="evidence" value="ECO:0007669"/>
    <property type="project" value="TreeGrafter"/>
</dbReference>
<dbReference type="GO" id="GO:0008270">
    <property type="term" value="F:zinc ion binding"/>
    <property type="evidence" value="ECO:0007669"/>
    <property type="project" value="UniProtKB-UniRule"/>
</dbReference>
<dbReference type="GO" id="GO:0006284">
    <property type="term" value="P:base-excision repair"/>
    <property type="evidence" value="ECO:0007669"/>
    <property type="project" value="TreeGrafter"/>
</dbReference>
<dbReference type="CDD" id="cd00019">
    <property type="entry name" value="AP2Ec"/>
    <property type="match status" value="1"/>
</dbReference>
<dbReference type="FunFam" id="3.20.20.150:FF:000001">
    <property type="entry name" value="Probable endonuclease 4"/>
    <property type="match status" value="1"/>
</dbReference>
<dbReference type="Gene3D" id="3.20.20.150">
    <property type="entry name" value="Divalent-metal-dependent TIM barrel enzymes"/>
    <property type="match status" value="1"/>
</dbReference>
<dbReference type="HAMAP" id="MF_00152">
    <property type="entry name" value="Nfo"/>
    <property type="match status" value="1"/>
</dbReference>
<dbReference type="InterPro" id="IPR001719">
    <property type="entry name" value="AP_endonuc_2"/>
</dbReference>
<dbReference type="InterPro" id="IPR018246">
    <property type="entry name" value="AP_endonuc_F2_Zn_BS"/>
</dbReference>
<dbReference type="InterPro" id="IPR036237">
    <property type="entry name" value="Xyl_isomerase-like_sf"/>
</dbReference>
<dbReference type="InterPro" id="IPR013022">
    <property type="entry name" value="Xyl_isomerase-like_TIM-brl"/>
</dbReference>
<dbReference type="NCBIfam" id="TIGR00587">
    <property type="entry name" value="nfo"/>
    <property type="match status" value="1"/>
</dbReference>
<dbReference type="NCBIfam" id="NF002199">
    <property type="entry name" value="PRK01060.1-4"/>
    <property type="match status" value="1"/>
</dbReference>
<dbReference type="PANTHER" id="PTHR21445:SF0">
    <property type="entry name" value="APURINIC-APYRIMIDINIC ENDONUCLEASE"/>
    <property type="match status" value="1"/>
</dbReference>
<dbReference type="PANTHER" id="PTHR21445">
    <property type="entry name" value="ENDONUCLEASE IV ENDODEOXYRIBONUCLEASE IV"/>
    <property type="match status" value="1"/>
</dbReference>
<dbReference type="Pfam" id="PF01261">
    <property type="entry name" value="AP_endonuc_2"/>
    <property type="match status" value="1"/>
</dbReference>
<dbReference type="SMART" id="SM00518">
    <property type="entry name" value="AP2Ec"/>
    <property type="match status" value="1"/>
</dbReference>
<dbReference type="SUPFAM" id="SSF51658">
    <property type="entry name" value="Xylose isomerase-like"/>
    <property type="match status" value="1"/>
</dbReference>
<dbReference type="PROSITE" id="PS00729">
    <property type="entry name" value="AP_NUCLEASE_F2_1"/>
    <property type="match status" value="1"/>
</dbReference>
<dbReference type="PROSITE" id="PS00730">
    <property type="entry name" value="AP_NUCLEASE_F2_2"/>
    <property type="match status" value="1"/>
</dbReference>
<dbReference type="PROSITE" id="PS00731">
    <property type="entry name" value="AP_NUCLEASE_F2_3"/>
    <property type="match status" value="1"/>
</dbReference>
<dbReference type="PROSITE" id="PS51432">
    <property type="entry name" value="AP_NUCLEASE_F2_4"/>
    <property type="match status" value="1"/>
</dbReference>
<keyword id="KW-0227">DNA damage</keyword>
<keyword id="KW-0234">DNA repair</keyword>
<keyword id="KW-0255">Endonuclease</keyword>
<keyword id="KW-0378">Hydrolase</keyword>
<keyword id="KW-0479">Metal-binding</keyword>
<keyword id="KW-0540">Nuclease</keyword>
<keyword id="KW-1185">Reference proteome</keyword>
<keyword id="KW-0862">Zinc</keyword>
<accession>A3MZ76</accession>
<comment type="function">
    <text evidence="1">Endonuclease IV plays a role in DNA repair. It cleaves phosphodiester bonds at apurinic or apyrimidinic (AP) sites, generating a 3'-hydroxyl group and a 5'-terminal sugar phosphate.</text>
</comment>
<comment type="catalytic activity">
    <reaction evidence="1">
        <text>Endonucleolytic cleavage to 5'-phosphooligonucleotide end-products.</text>
        <dbReference type="EC" id="3.1.21.2"/>
    </reaction>
</comment>
<comment type="cofactor">
    <cofactor evidence="1">
        <name>Zn(2+)</name>
        <dbReference type="ChEBI" id="CHEBI:29105"/>
    </cofactor>
    <text evidence="1">Binds 3 Zn(2+) ions.</text>
</comment>
<comment type="similarity">
    <text evidence="1">Belongs to the AP endonuclease 2 family.</text>
</comment>